<dbReference type="EC" id="4.1.1.37" evidence="1"/>
<dbReference type="EMBL" id="CR522870">
    <property type="protein sequence ID" value="CAG36009.1"/>
    <property type="molecule type" value="Genomic_DNA"/>
</dbReference>
<dbReference type="RefSeq" id="WP_011188521.1">
    <property type="nucleotide sequence ID" value="NC_006138.1"/>
</dbReference>
<dbReference type="SMR" id="Q6ANR5"/>
<dbReference type="STRING" id="177439.DP1280"/>
<dbReference type="KEGG" id="dps:DP1280"/>
<dbReference type="eggNOG" id="COG0407">
    <property type="taxonomic scope" value="Bacteria"/>
</dbReference>
<dbReference type="HOGENOM" id="CLU_040933_0_1_7"/>
<dbReference type="OrthoDB" id="9806656at2"/>
<dbReference type="UniPathway" id="UPA00251">
    <property type="reaction ID" value="UER00321"/>
</dbReference>
<dbReference type="Proteomes" id="UP000000602">
    <property type="component" value="Chromosome"/>
</dbReference>
<dbReference type="GO" id="GO:0005829">
    <property type="term" value="C:cytosol"/>
    <property type="evidence" value="ECO:0007669"/>
    <property type="project" value="TreeGrafter"/>
</dbReference>
<dbReference type="GO" id="GO:0004853">
    <property type="term" value="F:uroporphyrinogen decarboxylase activity"/>
    <property type="evidence" value="ECO:0007669"/>
    <property type="project" value="UniProtKB-UniRule"/>
</dbReference>
<dbReference type="GO" id="GO:0006782">
    <property type="term" value="P:protoporphyrinogen IX biosynthetic process"/>
    <property type="evidence" value="ECO:0007669"/>
    <property type="project" value="UniProtKB-UniRule"/>
</dbReference>
<dbReference type="CDD" id="cd00717">
    <property type="entry name" value="URO-D"/>
    <property type="match status" value="1"/>
</dbReference>
<dbReference type="FunFam" id="3.20.20.210:FF:000008">
    <property type="entry name" value="Uroporphyrinogen decarboxylase"/>
    <property type="match status" value="1"/>
</dbReference>
<dbReference type="Gene3D" id="3.20.20.210">
    <property type="match status" value="1"/>
</dbReference>
<dbReference type="HAMAP" id="MF_00218">
    <property type="entry name" value="URO_D"/>
    <property type="match status" value="1"/>
</dbReference>
<dbReference type="InterPro" id="IPR038071">
    <property type="entry name" value="UROD/MetE-like_sf"/>
</dbReference>
<dbReference type="InterPro" id="IPR006361">
    <property type="entry name" value="Uroporphyrinogen_deCO2ase_HemE"/>
</dbReference>
<dbReference type="InterPro" id="IPR000257">
    <property type="entry name" value="Uroporphyrinogen_deCOase"/>
</dbReference>
<dbReference type="NCBIfam" id="TIGR01464">
    <property type="entry name" value="hemE"/>
    <property type="match status" value="1"/>
</dbReference>
<dbReference type="PANTHER" id="PTHR21091">
    <property type="entry name" value="METHYLTETRAHYDROFOLATE:HOMOCYSTEINE METHYLTRANSFERASE RELATED"/>
    <property type="match status" value="1"/>
</dbReference>
<dbReference type="PANTHER" id="PTHR21091:SF169">
    <property type="entry name" value="UROPORPHYRINOGEN DECARBOXYLASE"/>
    <property type="match status" value="1"/>
</dbReference>
<dbReference type="Pfam" id="PF01208">
    <property type="entry name" value="URO-D"/>
    <property type="match status" value="1"/>
</dbReference>
<dbReference type="SUPFAM" id="SSF51726">
    <property type="entry name" value="UROD/MetE-like"/>
    <property type="match status" value="1"/>
</dbReference>
<dbReference type="PROSITE" id="PS00906">
    <property type="entry name" value="UROD_1"/>
    <property type="match status" value="1"/>
</dbReference>
<feature type="chain" id="PRO_0000325636" description="Uroporphyrinogen decarboxylase">
    <location>
        <begin position="1"/>
        <end position="339"/>
    </location>
</feature>
<feature type="binding site" evidence="1">
    <location>
        <begin position="23"/>
        <end position="27"/>
    </location>
    <ligand>
        <name>substrate</name>
    </ligand>
</feature>
<feature type="binding site" evidence="1">
    <location>
        <position position="72"/>
    </location>
    <ligand>
        <name>substrate</name>
    </ligand>
</feature>
<feature type="binding site" evidence="1">
    <location>
        <position position="147"/>
    </location>
    <ligand>
        <name>substrate</name>
    </ligand>
</feature>
<feature type="binding site" evidence="1">
    <location>
        <position position="202"/>
    </location>
    <ligand>
        <name>substrate</name>
    </ligand>
</feature>
<feature type="binding site" evidence="1">
    <location>
        <position position="315"/>
    </location>
    <ligand>
        <name>substrate</name>
    </ligand>
</feature>
<feature type="site" description="Transition state stabilizer" evidence="1">
    <location>
        <position position="72"/>
    </location>
</feature>
<protein>
    <recommendedName>
        <fullName evidence="1">Uroporphyrinogen decarboxylase</fullName>
        <shortName evidence="1">UPD</shortName>
        <shortName evidence="1">URO-D</shortName>
        <ecNumber evidence="1">4.1.1.37</ecNumber>
    </recommendedName>
</protein>
<reference key="1">
    <citation type="journal article" date="2004" name="Environ. Microbiol.">
        <title>The genome of Desulfotalea psychrophila, a sulfate-reducing bacterium from permanently cold Arctic sediments.</title>
        <authorList>
            <person name="Rabus R."/>
            <person name="Ruepp A."/>
            <person name="Frickey T."/>
            <person name="Rattei T."/>
            <person name="Fartmann B."/>
            <person name="Stark M."/>
            <person name="Bauer M."/>
            <person name="Zibat A."/>
            <person name="Lombardot T."/>
            <person name="Becker I."/>
            <person name="Amann J."/>
            <person name="Gellner K."/>
            <person name="Teeling H."/>
            <person name="Leuschner W.D."/>
            <person name="Gloeckner F.-O."/>
            <person name="Lupas A.N."/>
            <person name="Amann R."/>
            <person name="Klenk H.-P."/>
        </authorList>
    </citation>
    <scope>NUCLEOTIDE SEQUENCE [LARGE SCALE GENOMIC DNA]</scope>
    <source>
        <strain>DSM 12343 / LSv54</strain>
    </source>
</reference>
<evidence type="ECO:0000255" key="1">
    <source>
        <dbReference type="HAMAP-Rule" id="MF_00218"/>
    </source>
</evidence>
<organism>
    <name type="scientific">Desulfotalea psychrophila (strain LSv54 / DSM 12343)</name>
    <dbReference type="NCBI Taxonomy" id="177439"/>
    <lineage>
        <taxon>Bacteria</taxon>
        <taxon>Pseudomonadati</taxon>
        <taxon>Thermodesulfobacteriota</taxon>
        <taxon>Desulfobulbia</taxon>
        <taxon>Desulfobulbales</taxon>
        <taxon>Desulfocapsaceae</taxon>
        <taxon>Desulfotalea</taxon>
    </lineage>
</organism>
<keyword id="KW-0963">Cytoplasm</keyword>
<keyword id="KW-0210">Decarboxylase</keyword>
<keyword id="KW-0456">Lyase</keyword>
<keyword id="KW-0627">Porphyrin biosynthesis</keyword>
<keyword id="KW-1185">Reference proteome</keyword>
<comment type="function">
    <text evidence="1">Catalyzes the decarboxylation of four acetate groups of uroporphyrinogen-III to yield coproporphyrinogen-III.</text>
</comment>
<comment type="catalytic activity">
    <reaction evidence="1">
        <text>uroporphyrinogen III + 4 H(+) = coproporphyrinogen III + 4 CO2</text>
        <dbReference type="Rhea" id="RHEA:19865"/>
        <dbReference type="ChEBI" id="CHEBI:15378"/>
        <dbReference type="ChEBI" id="CHEBI:16526"/>
        <dbReference type="ChEBI" id="CHEBI:57308"/>
        <dbReference type="ChEBI" id="CHEBI:57309"/>
        <dbReference type="EC" id="4.1.1.37"/>
    </reaction>
</comment>
<comment type="pathway">
    <text evidence="1">Porphyrin-containing compound metabolism; protoporphyrin-IX biosynthesis; coproporphyrinogen-III from 5-aminolevulinate: step 4/4.</text>
</comment>
<comment type="subunit">
    <text evidence="1">Homodimer.</text>
</comment>
<comment type="subcellular location">
    <subcellularLocation>
        <location evidence="1">Cytoplasm</location>
    </subcellularLocation>
</comment>
<comment type="similarity">
    <text evidence="1">Belongs to the uroporphyrinogen decarboxylase family.</text>
</comment>
<sequence>MNDTFLKACRGEKTDYTPIWMMRQAGRYLPAYQKIRGKVSFLELCKNPALCVEVTLQPVDLLGMDAAILFSDILILMEAMGAKLEFNEGCGPVFPNPIKDQTALDALIIPDADDATGFVMETIRLLRGELQVPLIGFAGAPFTCATYLIEGGSSKVFWETKKMMFTQPELFHGIMEKITQATILYLQAQARAGAQALQIFDSWAGVLAPCDFEVFALPYVRRIIASLQQFDLPIIYFANNGSTLLEMSASSGASVLGLDWRINIGDAGKRVPGIALQGNIDPFALLLPKDKLRKRIGTILEDAKEVKGHIFNLGHGIHQFTPPEQARIAVDAVHELSCK</sequence>
<accession>Q6ANR5</accession>
<gene>
    <name evidence="1" type="primary">hemE</name>
    <name type="ordered locus">DP1280</name>
</gene>
<name>DCUP_DESPS</name>
<proteinExistence type="inferred from homology"/>